<sequence>MKKSELDVNQYLIRTDLAVETKEAMANQQAVPTKEIKGFIEKERDHGGIKIRTVDVTKEGAELSGKKEGRYLTLEAQGIRENDSEMQEKVSAVFAEEFSAFLENLNISKDASCLIVGLGNWNVTPDALGPMAVENLLVTRHLFKLQPENVQEGYRPVSAFAPGVMGITGIETSDIIKGVIEQSKPDFVIAIDALAARAVERVNTTIQISDTGIHPGSGVGNKRKDLSKDTLGVPVIAIGVPTVVDAVTIASDTVDYILKHFGREMKDNRPSRSLVPAGMTFGKKKVLTEDDLPDQKQRQSFLGIVGTLQEDEKRQLIHEVLSPLGHNLMVTPKEVDSFIDDMANVLANGLNTALHEKVSQENKGSYNH</sequence>
<reference key="1">
    <citation type="journal article" date="1991" name="J. Bacteriol.">
        <title>Cloning, nucleotide sequence, and regulation of the Bacillus subtilis gpr gene, which codes for the protease that initiates degradation of small, acid-soluble proteins during spore germination.</title>
        <authorList>
            <person name="Sussman M.D."/>
            <person name="Setlow P."/>
        </authorList>
    </citation>
    <scope>NUCLEOTIDE SEQUENCE [GENOMIC DNA]</scope>
    <source>
        <strain>168</strain>
    </source>
</reference>
<reference key="2">
    <citation type="journal article" date="1996" name="Microbiology">
        <title>Systematic sequencing of the 283 kb 210 degrees-232 degrees region of the Bacillus subtilis genome containing the skin element and many sporulation genes.</title>
        <authorList>
            <person name="Mizuno M."/>
            <person name="Masuda S."/>
            <person name="Takemaru K."/>
            <person name="Hosono S."/>
            <person name="Sato T."/>
            <person name="Takeuchi M."/>
            <person name="Kobayashi Y."/>
        </authorList>
    </citation>
    <scope>NUCLEOTIDE SEQUENCE [GENOMIC DNA]</scope>
    <source>
        <strain>168 / JH642</strain>
    </source>
</reference>
<reference key="3">
    <citation type="journal article" date="1997" name="Nature">
        <title>The complete genome sequence of the Gram-positive bacterium Bacillus subtilis.</title>
        <authorList>
            <person name="Kunst F."/>
            <person name="Ogasawara N."/>
            <person name="Moszer I."/>
            <person name="Albertini A.M."/>
            <person name="Alloni G."/>
            <person name="Azevedo V."/>
            <person name="Bertero M.G."/>
            <person name="Bessieres P."/>
            <person name="Bolotin A."/>
            <person name="Borchert S."/>
            <person name="Borriss R."/>
            <person name="Boursier L."/>
            <person name="Brans A."/>
            <person name="Braun M."/>
            <person name="Brignell S.C."/>
            <person name="Bron S."/>
            <person name="Brouillet S."/>
            <person name="Bruschi C.V."/>
            <person name="Caldwell B."/>
            <person name="Capuano V."/>
            <person name="Carter N.M."/>
            <person name="Choi S.-K."/>
            <person name="Codani J.-J."/>
            <person name="Connerton I.F."/>
            <person name="Cummings N.J."/>
            <person name="Daniel R.A."/>
            <person name="Denizot F."/>
            <person name="Devine K.M."/>
            <person name="Duesterhoeft A."/>
            <person name="Ehrlich S.D."/>
            <person name="Emmerson P.T."/>
            <person name="Entian K.-D."/>
            <person name="Errington J."/>
            <person name="Fabret C."/>
            <person name="Ferrari E."/>
            <person name="Foulger D."/>
            <person name="Fritz C."/>
            <person name="Fujita M."/>
            <person name="Fujita Y."/>
            <person name="Fuma S."/>
            <person name="Galizzi A."/>
            <person name="Galleron N."/>
            <person name="Ghim S.-Y."/>
            <person name="Glaser P."/>
            <person name="Goffeau A."/>
            <person name="Golightly E.J."/>
            <person name="Grandi G."/>
            <person name="Guiseppi G."/>
            <person name="Guy B.J."/>
            <person name="Haga K."/>
            <person name="Haiech J."/>
            <person name="Harwood C.R."/>
            <person name="Henaut A."/>
            <person name="Hilbert H."/>
            <person name="Holsappel S."/>
            <person name="Hosono S."/>
            <person name="Hullo M.-F."/>
            <person name="Itaya M."/>
            <person name="Jones L.-M."/>
            <person name="Joris B."/>
            <person name="Karamata D."/>
            <person name="Kasahara Y."/>
            <person name="Klaerr-Blanchard M."/>
            <person name="Klein C."/>
            <person name="Kobayashi Y."/>
            <person name="Koetter P."/>
            <person name="Koningstein G."/>
            <person name="Krogh S."/>
            <person name="Kumano M."/>
            <person name="Kurita K."/>
            <person name="Lapidus A."/>
            <person name="Lardinois S."/>
            <person name="Lauber J."/>
            <person name="Lazarevic V."/>
            <person name="Lee S.-M."/>
            <person name="Levine A."/>
            <person name="Liu H."/>
            <person name="Masuda S."/>
            <person name="Mauel C."/>
            <person name="Medigue C."/>
            <person name="Medina N."/>
            <person name="Mellado R.P."/>
            <person name="Mizuno M."/>
            <person name="Moestl D."/>
            <person name="Nakai S."/>
            <person name="Noback M."/>
            <person name="Noone D."/>
            <person name="O'Reilly M."/>
            <person name="Ogawa K."/>
            <person name="Ogiwara A."/>
            <person name="Oudega B."/>
            <person name="Park S.-H."/>
            <person name="Parro V."/>
            <person name="Pohl T.M."/>
            <person name="Portetelle D."/>
            <person name="Porwollik S."/>
            <person name="Prescott A.M."/>
            <person name="Presecan E."/>
            <person name="Pujic P."/>
            <person name="Purnelle B."/>
            <person name="Rapoport G."/>
            <person name="Rey M."/>
            <person name="Reynolds S."/>
            <person name="Rieger M."/>
            <person name="Rivolta C."/>
            <person name="Rocha E."/>
            <person name="Roche B."/>
            <person name="Rose M."/>
            <person name="Sadaie Y."/>
            <person name="Sato T."/>
            <person name="Scanlan E."/>
            <person name="Schleich S."/>
            <person name="Schroeter R."/>
            <person name="Scoffone F."/>
            <person name="Sekiguchi J."/>
            <person name="Sekowska A."/>
            <person name="Seror S.J."/>
            <person name="Serror P."/>
            <person name="Shin B.-S."/>
            <person name="Soldo B."/>
            <person name="Sorokin A."/>
            <person name="Tacconi E."/>
            <person name="Takagi T."/>
            <person name="Takahashi H."/>
            <person name="Takemaru K."/>
            <person name="Takeuchi M."/>
            <person name="Tamakoshi A."/>
            <person name="Tanaka T."/>
            <person name="Terpstra P."/>
            <person name="Tognoni A."/>
            <person name="Tosato V."/>
            <person name="Uchiyama S."/>
            <person name="Vandenbol M."/>
            <person name="Vannier F."/>
            <person name="Vassarotti A."/>
            <person name="Viari A."/>
            <person name="Wambutt R."/>
            <person name="Wedler E."/>
            <person name="Wedler H."/>
            <person name="Weitzenegger T."/>
            <person name="Winters P."/>
            <person name="Wipat A."/>
            <person name="Yamamoto H."/>
            <person name="Yamane K."/>
            <person name="Yasumoto K."/>
            <person name="Yata K."/>
            <person name="Yoshida K."/>
            <person name="Yoshikawa H.-F."/>
            <person name="Zumstein E."/>
            <person name="Yoshikawa H."/>
            <person name="Danchin A."/>
        </authorList>
    </citation>
    <scope>NUCLEOTIDE SEQUENCE [LARGE SCALE GENOMIC DNA]</scope>
    <source>
        <strain>168</strain>
    </source>
</reference>
<reference key="4">
    <citation type="journal article" date="1993" name="J. Bacteriol.">
        <title>Proteolytic processing of the protease which initiates degradation of small, acid-soluble proteins during germination of Bacillus subtilis spores.</title>
        <authorList>
            <person name="Sanchez-Salas J.-L."/>
            <person name="Setlow P."/>
        </authorList>
    </citation>
    <scope>PROTEIN SEQUENCE OF 1-6 AND 17-23</scope>
</reference>
<reference key="5">
    <citation type="submission" date="1993-09" db="EMBL/GenBank/DDBJ databases">
        <authorList>
            <person name="Takemaru K."/>
            <person name="Sato T."/>
            <person name="Kobayashi Y."/>
        </authorList>
    </citation>
    <scope>NUCLEOTIDE SEQUENCE [GENOMIC DNA] OF 144-368</scope>
    <source>
        <strain>168 / JH642</strain>
    </source>
</reference>
<name>GPR_BACSU</name>
<gene>
    <name type="primary">gpr</name>
    <name type="ordered locus">BSU25540</name>
</gene>
<accession>P22322</accession>
<protein>
    <recommendedName>
        <fullName>Germination protease</fullName>
        <ecNumber>3.4.24.78</ecNumber>
    </recommendedName>
    <alternativeName>
        <fullName>GPR endopeptidase</fullName>
    </alternativeName>
    <alternativeName>
        <fullName>Germination proteinase</fullName>
    </alternativeName>
    <alternativeName>
        <fullName>Spore protease</fullName>
    </alternativeName>
</protein>
<proteinExistence type="evidence at protein level"/>
<dbReference type="EC" id="3.4.24.78"/>
<dbReference type="EMBL" id="M55263">
    <property type="protein sequence ID" value="AAA22500.1"/>
    <property type="molecule type" value="Genomic_DNA"/>
</dbReference>
<dbReference type="EMBL" id="D84432">
    <property type="protein sequence ID" value="BAA12457.1"/>
    <property type="molecule type" value="Genomic_DNA"/>
</dbReference>
<dbReference type="EMBL" id="AL009126">
    <property type="protein sequence ID" value="CAB14496.1"/>
    <property type="molecule type" value="Genomic_DNA"/>
</dbReference>
<dbReference type="EMBL" id="D17650">
    <property type="protein sequence ID" value="BAA04541.1"/>
    <property type="molecule type" value="Genomic_DNA"/>
</dbReference>
<dbReference type="PIR" id="B39198">
    <property type="entry name" value="B39198"/>
</dbReference>
<dbReference type="RefSeq" id="NP_390432.1">
    <property type="nucleotide sequence ID" value="NC_000964.3"/>
</dbReference>
<dbReference type="RefSeq" id="WP_003229991.1">
    <property type="nucleotide sequence ID" value="NZ_OZ025638.1"/>
</dbReference>
<dbReference type="SMR" id="P22322"/>
<dbReference type="FunCoup" id="P22322">
    <property type="interactions" value="76"/>
</dbReference>
<dbReference type="STRING" id="224308.BSU25540"/>
<dbReference type="MEROPS" id="A25.001"/>
<dbReference type="PaxDb" id="224308-BSU25540"/>
<dbReference type="EnsemblBacteria" id="CAB14496">
    <property type="protein sequence ID" value="CAB14496"/>
    <property type="gene ID" value="BSU_25540"/>
</dbReference>
<dbReference type="GeneID" id="937838"/>
<dbReference type="KEGG" id="bsu:BSU25540"/>
<dbReference type="PATRIC" id="fig|224308.179.peg.2775"/>
<dbReference type="eggNOG" id="COG0680">
    <property type="taxonomic scope" value="Bacteria"/>
</dbReference>
<dbReference type="InParanoid" id="P22322"/>
<dbReference type="OrthoDB" id="9777293at2"/>
<dbReference type="PhylomeDB" id="P22322"/>
<dbReference type="BioCyc" id="BSUB:BSU25540-MONOMER"/>
<dbReference type="Proteomes" id="UP000001570">
    <property type="component" value="Chromosome"/>
</dbReference>
<dbReference type="GO" id="GO:0004222">
    <property type="term" value="F:metalloendopeptidase activity"/>
    <property type="evidence" value="ECO:0007669"/>
    <property type="project" value="UniProtKB-UniRule"/>
</dbReference>
<dbReference type="GO" id="GO:0006508">
    <property type="term" value="P:proteolysis"/>
    <property type="evidence" value="ECO:0007669"/>
    <property type="project" value="UniProtKB-UniRule"/>
</dbReference>
<dbReference type="GO" id="GO:0009847">
    <property type="term" value="P:spore germination"/>
    <property type="evidence" value="ECO:0007669"/>
    <property type="project" value="UniProtKB-UniRule"/>
</dbReference>
<dbReference type="Gene3D" id="3.40.50.1450">
    <property type="entry name" value="HybD-like"/>
    <property type="match status" value="1"/>
</dbReference>
<dbReference type="HAMAP" id="MF_00626">
    <property type="entry name" value="Germination_prot"/>
    <property type="match status" value="1"/>
</dbReference>
<dbReference type="InterPro" id="IPR023430">
    <property type="entry name" value="Pept_HybD-like_dom_sf"/>
</dbReference>
<dbReference type="InterPro" id="IPR005080">
    <property type="entry name" value="Peptidase_A25"/>
</dbReference>
<dbReference type="NCBIfam" id="TIGR01441">
    <property type="entry name" value="GPR"/>
    <property type="match status" value="1"/>
</dbReference>
<dbReference type="Pfam" id="PF03418">
    <property type="entry name" value="Peptidase_A25"/>
    <property type="match status" value="1"/>
</dbReference>
<dbReference type="PIRSF" id="PIRSF019549">
    <property type="entry name" value="Peptidase_A25"/>
    <property type="match status" value="1"/>
</dbReference>
<dbReference type="SUPFAM" id="SSF53163">
    <property type="entry name" value="HybD-like"/>
    <property type="match status" value="1"/>
</dbReference>
<comment type="function">
    <text>Initiates the degradation of small, acid-soluble proteins during spore germination.</text>
</comment>
<comment type="catalytic activity">
    <reaction>
        <text>Endopeptidase action with P4 Glu or Asp, P1 preferably Glu &gt; Asp, P1' hydrophobic and P2' Ala.</text>
        <dbReference type="EC" id="3.4.24.78"/>
    </reaction>
</comment>
<comment type="subunit">
    <text>Homotetramer.</text>
</comment>
<comment type="developmental stage">
    <text>GPR transcription occurs during sporulation in forespore first by sigma-F and then by sigma-G.</text>
</comment>
<comment type="PTM">
    <text>Autoproteolytically processed. The inactive tetrameric zymogen termed p46 autoprocesses to a smaller form termed p41, which is active only during spore germination.</text>
</comment>
<comment type="similarity">
    <text evidence="2">Belongs to the peptidase A25 family.</text>
</comment>
<keyword id="KW-0903">Direct protein sequencing</keyword>
<keyword id="KW-0378">Hydrolase</keyword>
<keyword id="KW-0645">Protease</keyword>
<keyword id="KW-1185">Reference proteome</keyword>
<keyword id="KW-0865">Zymogen</keyword>
<feature type="propeptide" id="PRO_0000026870" evidence="1">
    <location>
        <begin position="1"/>
        <end position="16"/>
    </location>
</feature>
<feature type="chain" id="PRO_0000026871" description="Germination protease">
    <location>
        <begin position="17"/>
        <end position="368"/>
    </location>
</feature>
<organism>
    <name type="scientific">Bacillus subtilis (strain 168)</name>
    <dbReference type="NCBI Taxonomy" id="224308"/>
    <lineage>
        <taxon>Bacteria</taxon>
        <taxon>Bacillati</taxon>
        <taxon>Bacillota</taxon>
        <taxon>Bacilli</taxon>
        <taxon>Bacillales</taxon>
        <taxon>Bacillaceae</taxon>
        <taxon>Bacillus</taxon>
    </lineage>
</organism>
<evidence type="ECO:0000269" key="1">
    <source>
    </source>
</evidence>
<evidence type="ECO:0000305" key="2"/>